<geneLocation type="chloroplast"/>
<evidence type="ECO:0000250" key="1"/>
<evidence type="ECO:0000305" key="2"/>
<protein>
    <recommendedName>
        <fullName evidence="2">Large ribosomal subunit protein uL23cz/uL23cy</fullName>
    </recommendedName>
    <alternativeName>
        <fullName>50S ribosomal protein L23, chloroplastic</fullName>
    </alternativeName>
</protein>
<organism>
    <name type="scientific">Platanus occidentalis</name>
    <name type="common">Sycamore</name>
    <name type="synonym">American plane tree</name>
    <dbReference type="NCBI Taxonomy" id="4403"/>
    <lineage>
        <taxon>Eukaryota</taxon>
        <taxon>Viridiplantae</taxon>
        <taxon>Streptophyta</taxon>
        <taxon>Embryophyta</taxon>
        <taxon>Tracheophyta</taxon>
        <taxon>Spermatophyta</taxon>
        <taxon>Magnoliopsida</taxon>
        <taxon>Proteales</taxon>
        <taxon>Platanaceae</taxon>
        <taxon>Platanus</taxon>
    </lineage>
</organism>
<sequence length="93" mass="10689">MDGIKYAVFTDKGIRLLGNNQYTSNVESGSTRTEIKHWVELFFGVKVIAMNSHRLPGKGRRMGPIMGHTMHYRRMIITLQPGYSIPPLRKKRT</sequence>
<gene>
    <name type="primary">rpl23-A</name>
</gene>
<gene>
    <name type="primary">rpl23-B</name>
</gene>
<name>RK23_PLAOC</name>
<keyword id="KW-0150">Chloroplast</keyword>
<keyword id="KW-0934">Plastid</keyword>
<keyword id="KW-0687">Ribonucleoprotein</keyword>
<keyword id="KW-0689">Ribosomal protein</keyword>
<keyword id="KW-0694">RNA-binding</keyword>
<keyword id="KW-0699">rRNA-binding</keyword>
<feature type="chain" id="PRO_0000272923" description="Large ribosomal subunit protein uL23cz/uL23cy">
    <location>
        <begin position="1"/>
        <end position="93"/>
    </location>
</feature>
<dbReference type="EMBL" id="DQ923116">
    <property type="protein sequence ID" value="ABI49822.1"/>
    <property type="molecule type" value="Genomic_DNA"/>
</dbReference>
<dbReference type="EMBL" id="DQ923116">
    <property type="protein sequence ID" value="ABI49841.1"/>
    <property type="molecule type" value="Genomic_DNA"/>
</dbReference>
<dbReference type="SMR" id="Q09FY4"/>
<dbReference type="GO" id="GO:0009507">
    <property type="term" value="C:chloroplast"/>
    <property type="evidence" value="ECO:0007669"/>
    <property type="project" value="UniProtKB-SubCell"/>
</dbReference>
<dbReference type="GO" id="GO:1990904">
    <property type="term" value="C:ribonucleoprotein complex"/>
    <property type="evidence" value="ECO:0007669"/>
    <property type="project" value="UniProtKB-KW"/>
</dbReference>
<dbReference type="GO" id="GO:0005840">
    <property type="term" value="C:ribosome"/>
    <property type="evidence" value="ECO:0007669"/>
    <property type="project" value="UniProtKB-KW"/>
</dbReference>
<dbReference type="GO" id="GO:0019843">
    <property type="term" value="F:rRNA binding"/>
    <property type="evidence" value="ECO:0007669"/>
    <property type="project" value="UniProtKB-UniRule"/>
</dbReference>
<dbReference type="GO" id="GO:0003735">
    <property type="term" value="F:structural constituent of ribosome"/>
    <property type="evidence" value="ECO:0007669"/>
    <property type="project" value="InterPro"/>
</dbReference>
<dbReference type="GO" id="GO:0006412">
    <property type="term" value="P:translation"/>
    <property type="evidence" value="ECO:0007669"/>
    <property type="project" value="UniProtKB-UniRule"/>
</dbReference>
<dbReference type="FunFam" id="3.30.70.330:FF:000002">
    <property type="entry name" value="50S ribosomal protein L23, chloroplastic"/>
    <property type="match status" value="1"/>
</dbReference>
<dbReference type="Gene3D" id="3.30.70.330">
    <property type="match status" value="1"/>
</dbReference>
<dbReference type="HAMAP" id="MF_01369_B">
    <property type="entry name" value="Ribosomal_uL23_B"/>
    <property type="match status" value="1"/>
</dbReference>
<dbReference type="InterPro" id="IPR012677">
    <property type="entry name" value="Nucleotide-bd_a/b_plait_sf"/>
</dbReference>
<dbReference type="InterPro" id="IPR013025">
    <property type="entry name" value="Ribosomal_uL23-like"/>
</dbReference>
<dbReference type="InterPro" id="IPR012678">
    <property type="entry name" value="Ribosomal_uL23/eL15/eS24_sf"/>
</dbReference>
<dbReference type="InterPro" id="IPR001014">
    <property type="entry name" value="Ribosomal_uL23_CS"/>
</dbReference>
<dbReference type="PANTHER" id="PTHR11620">
    <property type="entry name" value="60S RIBOSOMAL PROTEIN L23A"/>
    <property type="match status" value="1"/>
</dbReference>
<dbReference type="Pfam" id="PF00276">
    <property type="entry name" value="Ribosomal_L23"/>
    <property type="match status" value="1"/>
</dbReference>
<dbReference type="SUPFAM" id="SSF54189">
    <property type="entry name" value="Ribosomal proteins S24e, L23 and L15e"/>
    <property type="match status" value="1"/>
</dbReference>
<dbReference type="PROSITE" id="PS00050">
    <property type="entry name" value="RIBOSOMAL_L23"/>
    <property type="match status" value="1"/>
</dbReference>
<reference key="1">
    <citation type="journal article" date="2006" name="BMC Plant Biol.">
        <title>Rapid and accurate pyrosequencing of angiosperm plastid genomes.</title>
        <authorList>
            <person name="Moore M.J."/>
            <person name="Dhingra A."/>
            <person name="Soltis P.S."/>
            <person name="Shaw R."/>
            <person name="Farmerie W.G."/>
            <person name="Folta K.M."/>
            <person name="Soltis D.E."/>
        </authorList>
    </citation>
    <scope>NUCLEOTIDE SEQUENCE [LARGE SCALE GENOMIC DNA]</scope>
</reference>
<proteinExistence type="inferred from homology"/>
<accession>Q09FY4</accession>
<comment type="function">
    <text evidence="1">Binds to 23S rRNA.</text>
</comment>
<comment type="subunit">
    <text evidence="1">Part of the 50S ribosomal subunit.</text>
</comment>
<comment type="subcellular location">
    <subcellularLocation>
        <location>Plastid</location>
        <location>Chloroplast</location>
    </subcellularLocation>
</comment>
<comment type="similarity">
    <text evidence="2">Belongs to the universal ribosomal protein uL23 family.</text>
</comment>